<feature type="chain" id="PRO_0000303588" description="tRNA N6-adenosine threonylcarbamoyltransferase">
    <location>
        <begin position="1"/>
        <end position="356"/>
    </location>
</feature>
<feature type="binding site" evidence="1">
    <location>
        <position position="115"/>
    </location>
    <ligand>
        <name>Fe cation</name>
        <dbReference type="ChEBI" id="CHEBI:24875"/>
    </ligand>
</feature>
<feature type="binding site" evidence="1">
    <location>
        <position position="119"/>
    </location>
    <ligand>
        <name>Fe cation</name>
        <dbReference type="ChEBI" id="CHEBI:24875"/>
    </ligand>
</feature>
<feature type="binding site" evidence="1">
    <location>
        <begin position="138"/>
        <end position="142"/>
    </location>
    <ligand>
        <name>substrate</name>
    </ligand>
</feature>
<feature type="binding site" evidence="1">
    <location>
        <position position="171"/>
    </location>
    <ligand>
        <name>substrate</name>
    </ligand>
</feature>
<feature type="binding site" evidence="1">
    <location>
        <position position="184"/>
    </location>
    <ligand>
        <name>substrate</name>
    </ligand>
</feature>
<feature type="binding site" evidence="1">
    <location>
        <position position="283"/>
    </location>
    <ligand>
        <name>substrate</name>
    </ligand>
</feature>
<feature type="binding site" evidence="1">
    <location>
        <position position="311"/>
    </location>
    <ligand>
        <name>Fe cation</name>
        <dbReference type="ChEBI" id="CHEBI:24875"/>
    </ligand>
</feature>
<organism>
    <name type="scientific">Synechococcus sp. (strain WH7803)</name>
    <dbReference type="NCBI Taxonomy" id="32051"/>
    <lineage>
        <taxon>Bacteria</taxon>
        <taxon>Bacillati</taxon>
        <taxon>Cyanobacteriota</taxon>
        <taxon>Cyanophyceae</taxon>
        <taxon>Synechococcales</taxon>
        <taxon>Synechococcaceae</taxon>
        <taxon>Synechococcus</taxon>
    </lineage>
</organism>
<reference key="1">
    <citation type="submission" date="2006-05" db="EMBL/GenBank/DDBJ databases">
        <authorList>
            <consortium name="Genoscope"/>
        </authorList>
    </citation>
    <scope>NUCLEOTIDE SEQUENCE [LARGE SCALE GENOMIC DNA]</scope>
    <source>
        <strain>WH7803</strain>
    </source>
</reference>
<proteinExistence type="inferred from homology"/>
<name>TSAD_SYNPW</name>
<sequence length="356" mass="37340">MPKVLALETSCDESAAAVVQHSAGGLEVLAHRIASQVEEHAQWGGVVPEIASRRHVEALPHLISAVLDEAGLAVGEMDAVAATVTPGLVGALMVGSLTGRTLAALHHKPFLGVHHLEAHLASVRLASSPPEAPYVVLLVSGGHTELILVDSDSGLQRLGRSHDDAAGEAFDKVARLLGLAYPGGPAIQAAAKAGDPKRFSLPKGRVSRPEGGFYPYDFSFSGLKTAMLRQVESLKAQSDALPLEDLAASFEQIVVDVLVERSLRCCLDRGLSTLVMVGGVAANVRLRVQMEQQGRERGVSVHLAPLAYCTDNAAMVGAAALGRLQAGWGSSSIRLGVSARWPLEAGGDLYAQDPQF</sequence>
<accession>A5GMV4</accession>
<keyword id="KW-0012">Acyltransferase</keyword>
<keyword id="KW-0963">Cytoplasm</keyword>
<keyword id="KW-0408">Iron</keyword>
<keyword id="KW-0479">Metal-binding</keyword>
<keyword id="KW-1185">Reference proteome</keyword>
<keyword id="KW-0808">Transferase</keyword>
<keyword id="KW-0819">tRNA processing</keyword>
<evidence type="ECO:0000255" key="1">
    <source>
        <dbReference type="HAMAP-Rule" id="MF_01445"/>
    </source>
</evidence>
<comment type="function">
    <text evidence="1">Required for the formation of a threonylcarbamoyl group on adenosine at position 37 (t(6)A37) in tRNAs that read codons beginning with adenine. Is involved in the transfer of the threonylcarbamoyl moiety of threonylcarbamoyl-AMP (TC-AMP) to the N6 group of A37, together with TsaE and TsaB. TsaD likely plays a direct catalytic role in this reaction.</text>
</comment>
<comment type="catalytic activity">
    <reaction evidence="1">
        <text>L-threonylcarbamoyladenylate + adenosine(37) in tRNA = N(6)-L-threonylcarbamoyladenosine(37) in tRNA + AMP + H(+)</text>
        <dbReference type="Rhea" id="RHEA:37059"/>
        <dbReference type="Rhea" id="RHEA-COMP:10162"/>
        <dbReference type="Rhea" id="RHEA-COMP:10163"/>
        <dbReference type="ChEBI" id="CHEBI:15378"/>
        <dbReference type="ChEBI" id="CHEBI:73682"/>
        <dbReference type="ChEBI" id="CHEBI:74411"/>
        <dbReference type="ChEBI" id="CHEBI:74418"/>
        <dbReference type="ChEBI" id="CHEBI:456215"/>
        <dbReference type="EC" id="2.3.1.234"/>
    </reaction>
</comment>
<comment type="cofactor">
    <cofactor evidence="1">
        <name>Fe(2+)</name>
        <dbReference type="ChEBI" id="CHEBI:29033"/>
    </cofactor>
    <text evidence="1">Binds 1 Fe(2+) ion per subunit.</text>
</comment>
<comment type="subcellular location">
    <subcellularLocation>
        <location evidence="1">Cytoplasm</location>
    </subcellularLocation>
</comment>
<comment type="similarity">
    <text evidence="1">Belongs to the KAE1 / TsaD family.</text>
</comment>
<dbReference type="EC" id="2.3.1.234" evidence="1"/>
<dbReference type="EMBL" id="CT971583">
    <property type="protein sequence ID" value="CAK24269.1"/>
    <property type="molecule type" value="Genomic_DNA"/>
</dbReference>
<dbReference type="SMR" id="A5GMV4"/>
<dbReference type="STRING" id="32051.SynWH7803_1843"/>
<dbReference type="KEGG" id="syx:SynWH7803_1843"/>
<dbReference type="eggNOG" id="COG0533">
    <property type="taxonomic scope" value="Bacteria"/>
</dbReference>
<dbReference type="HOGENOM" id="CLU_023208_0_2_3"/>
<dbReference type="OrthoDB" id="9806197at2"/>
<dbReference type="Proteomes" id="UP000001566">
    <property type="component" value="Chromosome"/>
</dbReference>
<dbReference type="GO" id="GO:0005737">
    <property type="term" value="C:cytoplasm"/>
    <property type="evidence" value="ECO:0007669"/>
    <property type="project" value="UniProtKB-SubCell"/>
</dbReference>
<dbReference type="GO" id="GO:0005506">
    <property type="term" value="F:iron ion binding"/>
    <property type="evidence" value="ECO:0007669"/>
    <property type="project" value="UniProtKB-UniRule"/>
</dbReference>
<dbReference type="GO" id="GO:0061711">
    <property type="term" value="F:N(6)-L-threonylcarbamoyladenine synthase activity"/>
    <property type="evidence" value="ECO:0007669"/>
    <property type="project" value="UniProtKB-EC"/>
</dbReference>
<dbReference type="GO" id="GO:0002949">
    <property type="term" value="P:tRNA threonylcarbamoyladenosine modification"/>
    <property type="evidence" value="ECO:0007669"/>
    <property type="project" value="UniProtKB-UniRule"/>
</dbReference>
<dbReference type="CDD" id="cd24133">
    <property type="entry name" value="ASKHA_NBD_TsaD_bac"/>
    <property type="match status" value="1"/>
</dbReference>
<dbReference type="FunFam" id="3.30.420.40:FF:000012">
    <property type="entry name" value="tRNA N6-adenosine threonylcarbamoyltransferase"/>
    <property type="match status" value="1"/>
</dbReference>
<dbReference type="FunFam" id="3.30.420.40:FF:000040">
    <property type="entry name" value="tRNA N6-adenosine threonylcarbamoyltransferase"/>
    <property type="match status" value="1"/>
</dbReference>
<dbReference type="Gene3D" id="3.30.420.40">
    <property type="match status" value="2"/>
</dbReference>
<dbReference type="HAMAP" id="MF_01445">
    <property type="entry name" value="TsaD"/>
    <property type="match status" value="1"/>
</dbReference>
<dbReference type="InterPro" id="IPR043129">
    <property type="entry name" value="ATPase_NBD"/>
</dbReference>
<dbReference type="InterPro" id="IPR000905">
    <property type="entry name" value="Gcp-like_dom"/>
</dbReference>
<dbReference type="InterPro" id="IPR017861">
    <property type="entry name" value="KAE1/TsaD"/>
</dbReference>
<dbReference type="InterPro" id="IPR017860">
    <property type="entry name" value="Peptidase_M22_CS"/>
</dbReference>
<dbReference type="InterPro" id="IPR022450">
    <property type="entry name" value="TsaD"/>
</dbReference>
<dbReference type="NCBIfam" id="TIGR00329">
    <property type="entry name" value="gcp_kae1"/>
    <property type="match status" value="1"/>
</dbReference>
<dbReference type="NCBIfam" id="TIGR03723">
    <property type="entry name" value="T6A_TsaD_YgjD"/>
    <property type="match status" value="1"/>
</dbReference>
<dbReference type="PANTHER" id="PTHR11735">
    <property type="entry name" value="TRNA N6-ADENOSINE THREONYLCARBAMOYLTRANSFERASE"/>
    <property type="match status" value="1"/>
</dbReference>
<dbReference type="PANTHER" id="PTHR11735:SF6">
    <property type="entry name" value="TRNA N6-ADENOSINE THREONYLCARBAMOYLTRANSFERASE, MITOCHONDRIAL"/>
    <property type="match status" value="1"/>
</dbReference>
<dbReference type="Pfam" id="PF00814">
    <property type="entry name" value="TsaD"/>
    <property type="match status" value="1"/>
</dbReference>
<dbReference type="PRINTS" id="PR00789">
    <property type="entry name" value="OSIALOPTASE"/>
</dbReference>
<dbReference type="SUPFAM" id="SSF53067">
    <property type="entry name" value="Actin-like ATPase domain"/>
    <property type="match status" value="2"/>
</dbReference>
<dbReference type="PROSITE" id="PS01016">
    <property type="entry name" value="GLYCOPROTEASE"/>
    <property type="match status" value="1"/>
</dbReference>
<gene>
    <name evidence="1" type="primary">tsaD</name>
    <name type="synonym">gcp</name>
    <name type="ordered locus">SynWH7803_1843</name>
</gene>
<protein>
    <recommendedName>
        <fullName evidence="1">tRNA N6-adenosine threonylcarbamoyltransferase</fullName>
        <ecNumber evidence="1">2.3.1.234</ecNumber>
    </recommendedName>
    <alternativeName>
        <fullName evidence="1">N6-L-threonylcarbamoyladenine synthase</fullName>
        <shortName evidence="1">t(6)A synthase</shortName>
    </alternativeName>
    <alternativeName>
        <fullName evidence="1">t(6)A37 threonylcarbamoyladenosine biosynthesis protein TsaD</fullName>
    </alternativeName>
    <alternativeName>
        <fullName evidence="1">tRNA threonylcarbamoyladenosine biosynthesis protein TsaD</fullName>
    </alternativeName>
</protein>